<keyword id="KW-0474">Menaquinone biosynthesis</keyword>
<keyword id="KW-0489">Methyltransferase</keyword>
<keyword id="KW-1185">Reference proteome</keyword>
<keyword id="KW-0949">S-adenosyl-L-methionine</keyword>
<keyword id="KW-0808">Transferase</keyword>
<keyword id="KW-0831">Ubiquinone biosynthesis</keyword>
<organism>
    <name type="scientific">Nitrobacter hamburgensis (strain DSM 10229 / NCIMB 13809 / X14)</name>
    <dbReference type="NCBI Taxonomy" id="323097"/>
    <lineage>
        <taxon>Bacteria</taxon>
        <taxon>Pseudomonadati</taxon>
        <taxon>Pseudomonadota</taxon>
        <taxon>Alphaproteobacteria</taxon>
        <taxon>Hyphomicrobiales</taxon>
        <taxon>Nitrobacteraceae</taxon>
        <taxon>Nitrobacter</taxon>
    </lineage>
</organism>
<proteinExistence type="inferred from homology"/>
<protein>
    <recommendedName>
        <fullName evidence="1">Ubiquinone/menaquinone biosynthesis C-methyltransferase UbiE</fullName>
        <ecNumber evidence="1">2.1.1.163</ecNumber>
        <ecNumber evidence="1">2.1.1.201</ecNumber>
    </recommendedName>
    <alternativeName>
        <fullName evidence="1">2-methoxy-6-polyprenyl-1,4-benzoquinol methylase</fullName>
    </alternativeName>
    <alternativeName>
        <fullName evidence="1">Demethylmenaquinone methyltransferase</fullName>
    </alternativeName>
</protein>
<sequence>MDQPGDTTHFGFRDVPLGDKQTLVNGVFHNVAQRYDLMNDLMSAGLHRVWKDATITALNPPRNDTPFALLDVAGGTGDIAFRAAKAAGLGFRATVCDINPDMLAVGHERAIKQHLDHQVSFVEGNAETLAFADRSFDAYTIAFGIRNVPRIDSALREAFRVLKPGGRFLCLEFSTVDVPGLDKIYDLFSFKVIPPLGRAVTGDADSYQYLVESIRKFPKPNAFADMIRDAGFARVTWQVLSGGIVALHSGWRL</sequence>
<reference key="1">
    <citation type="submission" date="2006-03" db="EMBL/GenBank/DDBJ databases">
        <title>Complete sequence of chromosome of Nitrobacter hamburgensis X14.</title>
        <authorList>
            <consortium name="US DOE Joint Genome Institute"/>
            <person name="Copeland A."/>
            <person name="Lucas S."/>
            <person name="Lapidus A."/>
            <person name="Barry K."/>
            <person name="Detter J.C."/>
            <person name="Glavina del Rio T."/>
            <person name="Hammon N."/>
            <person name="Israni S."/>
            <person name="Dalin E."/>
            <person name="Tice H."/>
            <person name="Pitluck S."/>
            <person name="Chain P."/>
            <person name="Malfatti S."/>
            <person name="Shin M."/>
            <person name="Vergez L."/>
            <person name="Schmutz J."/>
            <person name="Larimer F."/>
            <person name="Land M."/>
            <person name="Hauser L."/>
            <person name="Kyrpides N."/>
            <person name="Ivanova N."/>
            <person name="Ward B."/>
            <person name="Arp D."/>
            <person name="Klotz M."/>
            <person name="Stein L."/>
            <person name="O'Mullan G."/>
            <person name="Starkenburg S."/>
            <person name="Sayavedra L."/>
            <person name="Poret-Peterson A.T."/>
            <person name="Gentry M.E."/>
            <person name="Bruce D."/>
            <person name="Richardson P."/>
        </authorList>
    </citation>
    <scope>NUCLEOTIDE SEQUENCE [LARGE SCALE GENOMIC DNA]</scope>
    <source>
        <strain>DSM 10229 / NCIMB 13809 / X14</strain>
    </source>
</reference>
<dbReference type="EC" id="2.1.1.163" evidence="1"/>
<dbReference type="EC" id="2.1.1.201" evidence="1"/>
<dbReference type="EMBL" id="CP000319">
    <property type="protein sequence ID" value="ABE60950.1"/>
    <property type="molecule type" value="Genomic_DNA"/>
</dbReference>
<dbReference type="RefSeq" id="WP_011508657.1">
    <property type="nucleotide sequence ID" value="NC_007964.1"/>
</dbReference>
<dbReference type="SMR" id="Q1QS47"/>
<dbReference type="STRING" id="323097.Nham_0049"/>
<dbReference type="KEGG" id="nha:Nham_0049"/>
<dbReference type="eggNOG" id="COG2226">
    <property type="taxonomic scope" value="Bacteria"/>
</dbReference>
<dbReference type="HOGENOM" id="CLU_037990_0_1_5"/>
<dbReference type="OrthoDB" id="9808140at2"/>
<dbReference type="UniPathway" id="UPA00079">
    <property type="reaction ID" value="UER00169"/>
</dbReference>
<dbReference type="UniPathway" id="UPA00232"/>
<dbReference type="Proteomes" id="UP000001953">
    <property type="component" value="Chromosome"/>
</dbReference>
<dbReference type="GO" id="GO:0008425">
    <property type="term" value="F:2-methoxy-6-polyprenyl-1,4-benzoquinol methyltransferase activity"/>
    <property type="evidence" value="ECO:0007669"/>
    <property type="project" value="UniProtKB-UniRule"/>
</dbReference>
<dbReference type="GO" id="GO:0043770">
    <property type="term" value="F:demethylmenaquinone methyltransferase activity"/>
    <property type="evidence" value="ECO:0007669"/>
    <property type="project" value="UniProtKB-UniRule"/>
</dbReference>
<dbReference type="GO" id="GO:0009060">
    <property type="term" value="P:aerobic respiration"/>
    <property type="evidence" value="ECO:0007669"/>
    <property type="project" value="UniProtKB-UniRule"/>
</dbReference>
<dbReference type="GO" id="GO:0009234">
    <property type="term" value="P:menaquinone biosynthetic process"/>
    <property type="evidence" value="ECO:0007669"/>
    <property type="project" value="UniProtKB-UniRule"/>
</dbReference>
<dbReference type="GO" id="GO:0032259">
    <property type="term" value="P:methylation"/>
    <property type="evidence" value="ECO:0007669"/>
    <property type="project" value="UniProtKB-KW"/>
</dbReference>
<dbReference type="CDD" id="cd02440">
    <property type="entry name" value="AdoMet_MTases"/>
    <property type="match status" value="1"/>
</dbReference>
<dbReference type="Gene3D" id="3.40.50.150">
    <property type="entry name" value="Vaccinia Virus protein VP39"/>
    <property type="match status" value="1"/>
</dbReference>
<dbReference type="HAMAP" id="MF_01813">
    <property type="entry name" value="MenG_UbiE_methyltr"/>
    <property type="match status" value="1"/>
</dbReference>
<dbReference type="InterPro" id="IPR029063">
    <property type="entry name" value="SAM-dependent_MTases_sf"/>
</dbReference>
<dbReference type="InterPro" id="IPR004033">
    <property type="entry name" value="UbiE/COQ5_MeTrFase"/>
</dbReference>
<dbReference type="InterPro" id="IPR023576">
    <property type="entry name" value="UbiE/COQ5_MeTrFase_CS"/>
</dbReference>
<dbReference type="NCBIfam" id="TIGR01934">
    <property type="entry name" value="MenG_MenH_UbiE"/>
    <property type="match status" value="1"/>
</dbReference>
<dbReference type="NCBIfam" id="NF001242">
    <property type="entry name" value="PRK00216.1-3"/>
    <property type="match status" value="1"/>
</dbReference>
<dbReference type="PANTHER" id="PTHR43591:SF24">
    <property type="entry name" value="2-METHOXY-6-POLYPRENYL-1,4-BENZOQUINOL METHYLASE, MITOCHONDRIAL"/>
    <property type="match status" value="1"/>
</dbReference>
<dbReference type="PANTHER" id="PTHR43591">
    <property type="entry name" value="METHYLTRANSFERASE"/>
    <property type="match status" value="1"/>
</dbReference>
<dbReference type="Pfam" id="PF01209">
    <property type="entry name" value="Ubie_methyltran"/>
    <property type="match status" value="1"/>
</dbReference>
<dbReference type="SUPFAM" id="SSF53335">
    <property type="entry name" value="S-adenosyl-L-methionine-dependent methyltransferases"/>
    <property type="match status" value="1"/>
</dbReference>
<dbReference type="PROSITE" id="PS51608">
    <property type="entry name" value="SAM_MT_UBIE"/>
    <property type="match status" value="1"/>
</dbReference>
<dbReference type="PROSITE" id="PS01183">
    <property type="entry name" value="UBIE_1"/>
    <property type="match status" value="1"/>
</dbReference>
<dbReference type="PROSITE" id="PS01184">
    <property type="entry name" value="UBIE_2"/>
    <property type="match status" value="1"/>
</dbReference>
<name>UBIE_NITHX</name>
<gene>
    <name evidence="1" type="primary">ubiE</name>
    <name type="ordered locus">Nham_0049</name>
</gene>
<comment type="function">
    <text evidence="1">Methyltransferase required for the conversion of demethylmenaquinol (DMKH2) to menaquinol (MKH2) and the conversion of 2-polyprenyl-6-methoxy-1,4-benzoquinol (DDMQH2) to 2-polyprenyl-3-methyl-6-methoxy-1,4-benzoquinol (DMQH2).</text>
</comment>
<comment type="catalytic activity">
    <reaction evidence="1">
        <text>a 2-demethylmenaquinol + S-adenosyl-L-methionine = a menaquinol + S-adenosyl-L-homocysteine + H(+)</text>
        <dbReference type="Rhea" id="RHEA:42640"/>
        <dbReference type="Rhea" id="RHEA-COMP:9539"/>
        <dbReference type="Rhea" id="RHEA-COMP:9563"/>
        <dbReference type="ChEBI" id="CHEBI:15378"/>
        <dbReference type="ChEBI" id="CHEBI:18151"/>
        <dbReference type="ChEBI" id="CHEBI:55437"/>
        <dbReference type="ChEBI" id="CHEBI:57856"/>
        <dbReference type="ChEBI" id="CHEBI:59789"/>
        <dbReference type="EC" id="2.1.1.163"/>
    </reaction>
</comment>
<comment type="catalytic activity">
    <reaction evidence="1">
        <text>a 2-methoxy-6-(all-trans-polyprenyl)benzene-1,4-diol + S-adenosyl-L-methionine = a 5-methoxy-2-methyl-3-(all-trans-polyprenyl)benzene-1,4-diol + S-adenosyl-L-homocysteine + H(+)</text>
        <dbReference type="Rhea" id="RHEA:28286"/>
        <dbReference type="Rhea" id="RHEA-COMP:10858"/>
        <dbReference type="Rhea" id="RHEA-COMP:10859"/>
        <dbReference type="ChEBI" id="CHEBI:15378"/>
        <dbReference type="ChEBI" id="CHEBI:57856"/>
        <dbReference type="ChEBI" id="CHEBI:59789"/>
        <dbReference type="ChEBI" id="CHEBI:84166"/>
        <dbReference type="ChEBI" id="CHEBI:84167"/>
        <dbReference type="EC" id="2.1.1.201"/>
    </reaction>
</comment>
<comment type="pathway">
    <text evidence="1">Quinol/quinone metabolism; menaquinone biosynthesis; menaquinol from 1,4-dihydroxy-2-naphthoate: step 2/2.</text>
</comment>
<comment type="pathway">
    <text evidence="1">Cofactor biosynthesis; ubiquinone biosynthesis.</text>
</comment>
<comment type="similarity">
    <text evidence="1">Belongs to the class I-like SAM-binding methyltransferase superfamily. MenG/UbiE family.</text>
</comment>
<evidence type="ECO:0000255" key="1">
    <source>
        <dbReference type="HAMAP-Rule" id="MF_01813"/>
    </source>
</evidence>
<accession>Q1QS47</accession>
<feature type="chain" id="PRO_1000056267" description="Ubiquinone/menaquinone biosynthesis C-methyltransferase UbiE">
    <location>
        <begin position="1"/>
        <end position="253"/>
    </location>
</feature>
<feature type="binding site" evidence="1">
    <location>
        <position position="76"/>
    </location>
    <ligand>
        <name>S-adenosyl-L-methionine</name>
        <dbReference type="ChEBI" id="CHEBI:59789"/>
    </ligand>
</feature>
<feature type="binding site" evidence="1">
    <location>
        <position position="97"/>
    </location>
    <ligand>
        <name>S-adenosyl-L-methionine</name>
        <dbReference type="ChEBI" id="CHEBI:59789"/>
    </ligand>
</feature>
<feature type="binding site" evidence="1">
    <location>
        <begin position="125"/>
        <end position="126"/>
    </location>
    <ligand>
        <name>S-adenosyl-L-methionine</name>
        <dbReference type="ChEBI" id="CHEBI:59789"/>
    </ligand>
</feature>